<name>TRUA_TREPA</name>
<organism>
    <name type="scientific">Treponema pallidum (strain Nichols)</name>
    <dbReference type="NCBI Taxonomy" id="243276"/>
    <lineage>
        <taxon>Bacteria</taxon>
        <taxon>Pseudomonadati</taxon>
        <taxon>Spirochaetota</taxon>
        <taxon>Spirochaetia</taxon>
        <taxon>Spirochaetales</taxon>
        <taxon>Treponemataceae</taxon>
        <taxon>Treponema</taxon>
    </lineage>
</organism>
<dbReference type="EC" id="5.4.99.12" evidence="1"/>
<dbReference type="EMBL" id="AE000520">
    <property type="protein sequence ID" value="AAC65796.1"/>
    <property type="molecule type" value="Genomic_DNA"/>
</dbReference>
<dbReference type="PIR" id="H71276">
    <property type="entry name" value="H71276"/>
</dbReference>
<dbReference type="RefSeq" id="WP_010882274.1">
    <property type="nucleotide sequence ID" value="NC_000919.1"/>
</dbReference>
<dbReference type="SMR" id="O83802"/>
<dbReference type="IntAct" id="O83802">
    <property type="interactions" value="4"/>
</dbReference>
<dbReference type="STRING" id="243276.TP_0830"/>
<dbReference type="EnsemblBacteria" id="AAC65796">
    <property type="protein sequence ID" value="AAC65796"/>
    <property type="gene ID" value="TP_0830"/>
</dbReference>
<dbReference type="KEGG" id="tpa:TP_0830"/>
<dbReference type="eggNOG" id="COG0101">
    <property type="taxonomic scope" value="Bacteria"/>
</dbReference>
<dbReference type="HOGENOM" id="CLU_014673_0_1_12"/>
<dbReference type="OrthoDB" id="9811823at2"/>
<dbReference type="Proteomes" id="UP000000811">
    <property type="component" value="Chromosome"/>
</dbReference>
<dbReference type="GO" id="GO:0003723">
    <property type="term" value="F:RNA binding"/>
    <property type="evidence" value="ECO:0007669"/>
    <property type="project" value="InterPro"/>
</dbReference>
<dbReference type="GO" id="GO:0160147">
    <property type="term" value="F:tRNA pseudouridine(38-40) synthase activity"/>
    <property type="evidence" value="ECO:0007669"/>
    <property type="project" value="UniProtKB-EC"/>
</dbReference>
<dbReference type="GO" id="GO:0031119">
    <property type="term" value="P:tRNA pseudouridine synthesis"/>
    <property type="evidence" value="ECO:0007669"/>
    <property type="project" value="UniProtKB-UniRule"/>
</dbReference>
<dbReference type="CDD" id="cd02570">
    <property type="entry name" value="PseudoU_synth_EcTruA"/>
    <property type="match status" value="1"/>
</dbReference>
<dbReference type="FunFam" id="3.30.70.580:FF:000001">
    <property type="entry name" value="tRNA pseudouridine synthase A"/>
    <property type="match status" value="1"/>
</dbReference>
<dbReference type="Gene3D" id="3.30.70.660">
    <property type="entry name" value="Pseudouridine synthase I, catalytic domain, C-terminal subdomain"/>
    <property type="match status" value="1"/>
</dbReference>
<dbReference type="Gene3D" id="3.30.70.580">
    <property type="entry name" value="Pseudouridine synthase I, catalytic domain, N-terminal subdomain"/>
    <property type="match status" value="1"/>
</dbReference>
<dbReference type="HAMAP" id="MF_00171">
    <property type="entry name" value="TruA"/>
    <property type="match status" value="1"/>
</dbReference>
<dbReference type="InterPro" id="IPR020103">
    <property type="entry name" value="PsdUridine_synth_cat_dom_sf"/>
</dbReference>
<dbReference type="InterPro" id="IPR001406">
    <property type="entry name" value="PsdUridine_synth_TruA"/>
</dbReference>
<dbReference type="InterPro" id="IPR020097">
    <property type="entry name" value="PsdUridine_synth_TruA_a/b_dom"/>
</dbReference>
<dbReference type="InterPro" id="IPR020095">
    <property type="entry name" value="PsdUridine_synth_TruA_C"/>
</dbReference>
<dbReference type="InterPro" id="IPR020094">
    <property type="entry name" value="TruA/RsuA/RluB/E/F_N"/>
</dbReference>
<dbReference type="NCBIfam" id="TIGR00071">
    <property type="entry name" value="hisT_truA"/>
    <property type="match status" value="1"/>
</dbReference>
<dbReference type="PANTHER" id="PTHR11142">
    <property type="entry name" value="PSEUDOURIDYLATE SYNTHASE"/>
    <property type="match status" value="1"/>
</dbReference>
<dbReference type="PANTHER" id="PTHR11142:SF0">
    <property type="entry name" value="TRNA PSEUDOURIDINE SYNTHASE-LIKE 1"/>
    <property type="match status" value="1"/>
</dbReference>
<dbReference type="Pfam" id="PF01416">
    <property type="entry name" value="PseudoU_synth_1"/>
    <property type="match status" value="2"/>
</dbReference>
<dbReference type="PIRSF" id="PIRSF001430">
    <property type="entry name" value="tRNA_psdUrid_synth"/>
    <property type="match status" value="1"/>
</dbReference>
<dbReference type="SUPFAM" id="SSF55120">
    <property type="entry name" value="Pseudouridine synthase"/>
    <property type="match status" value="1"/>
</dbReference>
<comment type="function">
    <text evidence="1">Formation of pseudouridine at positions 38, 39 and 40 in the anticodon stem and loop of transfer RNAs.</text>
</comment>
<comment type="catalytic activity">
    <reaction evidence="1">
        <text>uridine(38/39/40) in tRNA = pseudouridine(38/39/40) in tRNA</text>
        <dbReference type="Rhea" id="RHEA:22376"/>
        <dbReference type="Rhea" id="RHEA-COMP:10085"/>
        <dbReference type="Rhea" id="RHEA-COMP:10087"/>
        <dbReference type="ChEBI" id="CHEBI:65314"/>
        <dbReference type="ChEBI" id="CHEBI:65315"/>
        <dbReference type="EC" id="5.4.99.12"/>
    </reaction>
</comment>
<comment type="subunit">
    <text evidence="1">Homodimer.</text>
</comment>
<comment type="similarity">
    <text evidence="1">Belongs to the tRNA pseudouridine synthase TruA family.</text>
</comment>
<feature type="chain" id="PRO_0000057479" description="tRNA pseudouridine synthase A">
    <location>
        <begin position="1"/>
        <end position="280"/>
    </location>
</feature>
<feature type="active site" description="Nucleophile" evidence="1">
    <location>
        <position position="60"/>
    </location>
</feature>
<feature type="binding site" evidence="1">
    <location>
        <position position="119"/>
    </location>
    <ligand>
        <name>substrate</name>
    </ligand>
</feature>
<sequence>MNDVRKILLRISYDGTRFCGWQKQVSGSRERAPSVQGELEKVAEKIHHQKIAVIGSGRTDSGVHAVGQAAHFCTPMRNILAYRFIPAFNSLLPHSIRITDAREVSSQLHARFSAVMRTYRYHLHCAPVAYAHELPYCWHIARMPDIHLLNQYAATLKGELDCTSFAAAGDKSASKSRYFYDTHFSFNHRVLTFEISANAFLWKMVRSLTGTLLHCEKKRCSVREFVRILHAKDRRLQGPPHRRMGYSYGTSVTPNTYSVQNRNTLARELASTGNARWKTY</sequence>
<protein>
    <recommendedName>
        <fullName evidence="1">tRNA pseudouridine synthase A</fullName>
        <ecNumber evidence="1">5.4.99.12</ecNumber>
    </recommendedName>
    <alternativeName>
        <fullName evidence="1">tRNA pseudouridine(38-40) synthase</fullName>
    </alternativeName>
    <alternativeName>
        <fullName evidence="1">tRNA pseudouridylate synthase I</fullName>
    </alternativeName>
    <alternativeName>
        <fullName evidence="1">tRNA-uridine isomerase I</fullName>
    </alternativeName>
</protein>
<gene>
    <name evidence="1" type="primary">truA</name>
    <name type="synonym">hisT</name>
    <name type="ordered locus">TP_0830</name>
</gene>
<accession>O83802</accession>
<proteinExistence type="inferred from homology"/>
<evidence type="ECO:0000255" key="1">
    <source>
        <dbReference type="HAMAP-Rule" id="MF_00171"/>
    </source>
</evidence>
<keyword id="KW-0413">Isomerase</keyword>
<keyword id="KW-1185">Reference proteome</keyword>
<keyword id="KW-0819">tRNA processing</keyword>
<reference key="1">
    <citation type="journal article" date="1998" name="Science">
        <title>Complete genome sequence of Treponema pallidum, the syphilis spirochete.</title>
        <authorList>
            <person name="Fraser C.M."/>
            <person name="Norris S.J."/>
            <person name="Weinstock G.M."/>
            <person name="White O."/>
            <person name="Sutton G.G."/>
            <person name="Dodson R.J."/>
            <person name="Gwinn M.L."/>
            <person name="Hickey E.K."/>
            <person name="Clayton R.A."/>
            <person name="Ketchum K.A."/>
            <person name="Sodergren E."/>
            <person name="Hardham J.M."/>
            <person name="McLeod M.P."/>
            <person name="Salzberg S.L."/>
            <person name="Peterson J.D."/>
            <person name="Khalak H.G."/>
            <person name="Richardson D.L."/>
            <person name="Howell J.K."/>
            <person name="Chidambaram M."/>
            <person name="Utterback T.R."/>
            <person name="McDonald L.A."/>
            <person name="Artiach P."/>
            <person name="Bowman C."/>
            <person name="Cotton M.D."/>
            <person name="Fujii C."/>
            <person name="Garland S.A."/>
            <person name="Hatch B."/>
            <person name="Horst K."/>
            <person name="Roberts K.M."/>
            <person name="Sandusky M."/>
            <person name="Weidman J.F."/>
            <person name="Smith H.O."/>
            <person name="Venter J.C."/>
        </authorList>
    </citation>
    <scope>NUCLEOTIDE SEQUENCE [LARGE SCALE GENOMIC DNA]</scope>
    <source>
        <strain>Nichols</strain>
    </source>
</reference>